<gene>
    <name type="primary">NAR1</name>
    <name type="ORF">Kpol_1015p11</name>
</gene>
<comment type="function">
    <text evidence="1">Component of the cytosolic Fe/S protein assembly machinery. Required for maturation of extramitochondrial Fe/S proteins. May play a role in the transfer of pre-assembled Fe/S clusters to target apoproteins (By similarity).</text>
</comment>
<comment type="similarity">
    <text evidence="4">Belongs to the NARF family.</text>
</comment>
<accession>A7TQP0</accession>
<evidence type="ECO:0000250" key="1"/>
<evidence type="ECO:0000255" key="2"/>
<evidence type="ECO:0000256" key="3">
    <source>
        <dbReference type="SAM" id="MobiDB-lite"/>
    </source>
</evidence>
<evidence type="ECO:0000305" key="4"/>
<keyword id="KW-0004">4Fe-4S</keyword>
<keyword id="KW-0408">Iron</keyword>
<keyword id="KW-0411">Iron-sulfur</keyword>
<keyword id="KW-0479">Metal-binding</keyword>
<keyword id="KW-1185">Reference proteome</keyword>
<name>NAR1_VANPO</name>
<dbReference type="EMBL" id="DS480461">
    <property type="protein sequence ID" value="EDO15421.1"/>
    <property type="molecule type" value="Genomic_DNA"/>
</dbReference>
<dbReference type="RefSeq" id="XP_001643279.1">
    <property type="nucleotide sequence ID" value="XM_001643229.1"/>
</dbReference>
<dbReference type="SMR" id="A7TQP0"/>
<dbReference type="FunCoup" id="A7TQP0">
    <property type="interactions" value="390"/>
</dbReference>
<dbReference type="STRING" id="436907.A7TQP0"/>
<dbReference type="GeneID" id="5543496"/>
<dbReference type="KEGG" id="vpo:Kpol_1015p11"/>
<dbReference type="eggNOG" id="KOG2439">
    <property type="taxonomic scope" value="Eukaryota"/>
</dbReference>
<dbReference type="HOGENOM" id="CLU_018240_0_1_1"/>
<dbReference type="InParanoid" id="A7TQP0"/>
<dbReference type="OMA" id="GYLHHVL"/>
<dbReference type="OrthoDB" id="10253113at2759"/>
<dbReference type="PhylomeDB" id="A7TQP0"/>
<dbReference type="Proteomes" id="UP000000267">
    <property type="component" value="Unassembled WGS sequence"/>
</dbReference>
<dbReference type="GO" id="GO:0005829">
    <property type="term" value="C:cytosol"/>
    <property type="evidence" value="ECO:0007669"/>
    <property type="project" value="EnsemblFungi"/>
</dbReference>
<dbReference type="GO" id="GO:0016020">
    <property type="term" value="C:membrane"/>
    <property type="evidence" value="ECO:0007669"/>
    <property type="project" value="EnsemblFungi"/>
</dbReference>
<dbReference type="GO" id="GO:0051539">
    <property type="term" value="F:4 iron, 4 sulfur cluster binding"/>
    <property type="evidence" value="ECO:0007669"/>
    <property type="project" value="UniProtKB-KW"/>
</dbReference>
<dbReference type="GO" id="GO:0051536">
    <property type="term" value="F:iron-sulfur cluster binding"/>
    <property type="evidence" value="ECO:0000250"/>
    <property type="project" value="UniProtKB"/>
</dbReference>
<dbReference type="GO" id="GO:0046872">
    <property type="term" value="F:metal ion binding"/>
    <property type="evidence" value="ECO:0007669"/>
    <property type="project" value="UniProtKB-KW"/>
</dbReference>
<dbReference type="GO" id="GO:0016226">
    <property type="term" value="P:iron-sulfur cluster assembly"/>
    <property type="evidence" value="ECO:0000250"/>
    <property type="project" value="UniProtKB"/>
</dbReference>
<dbReference type="Gene3D" id="3.40.50.1780">
    <property type="match status" value="2"/>
</dbReference>
<dbReference type="Gene3D" id="3.40.950.10">
    <property type="entry name" value="Fe-only Hydrogenase (Larger Subunit), Chain L, domain 3"/>
    <property type="match status" value="2"/>
</dbReference>
<dbReference type="InterPro" id="IPR050340">
    <property type="entry name" value="Cytosolic_Fe-S_CAF"/>
</dbReference>
<dbReference type="InterPro" id="IPR009016">
    <property type="entry name" value="Fe_hydrogenase"/>
</dbReference>
<dbReference type="InterPro" id="IPR004108">
    <property type="entry name" value="Fe_hydrogenase_lsu_C"/>
</dbReference>
<dbReference type="PANTHER" id="PTHR11615">
    <property type="entry name" value="NITRATE, FORMATE, IRON DEHYDROGENASE"/>
    <property type="match status" value="1"/>
</dbReference>
<dbReference type="Pfam" id="PF02906">
    <property type="entry name" value="Fe_hyd_lg_C"/>
    <property type="match status" value="1"/>
</dbReference>
<dbReference type="SUPFAM" id="SSF53920">
    <property type="entry name" value="Fe-only hydrogenase"/>
    <property type="match status" value="1"/>
</dbReference>
<reference key="1">
    <citation type="journal article" date="2007" name="Proc. Natl. Acad. Sci. U.S.A.">
        <title>Independent sorting-out of thousands of duplicated gene pairs in two yeast species descended from a whole-genome duplication.</title>
        <authorList>
            <person name="Scannell D.R."/>
            <person name="Frank A.C."/>
            <person name="Conant G.C."/>
            <person name="Byrne K.P."/>
            <person name="Woolfit M."/>
            <person name="Wolfe K.H."/>
        </authorList>
    </citation>
    <scope>NUCLEOTIDE SEQUENCE [LARGE SCALE GENOMIC DNA]</scope>
    <source>
        <strain>ATCC 22028 / DSM 70294 / BCRC 21397 / CBS 2163 / NBRC 10782 / NRRL Y-8283 / UCD 57-17</strain>
    </source>
</reference>
<feature type="chain" id="PRO_0000383741" description="Cytosolic Fe-S cluster assembly factor NAR1">
    <location>
        <begin position="1"/>
        <end position="524"/>
    </location>
</feature>
<feature type="region of interest" description="Disordered" evidence="3">
    <location>
        <begin position="362"/>
        <end position="388"/>
    </location>
</feature>
<feature type="region of interest" description="Disordered" evidence="3">
    <location>
        <begin position="501"/>
        <end position="524"/>
    </location>
</feature>
<feature type="compositionally biased region" description="Low complexity" evidence="3">
    <location>
        <begin position="369"/>
        <end position="388"/>
    </location>
</feature>
<feature type="binding site" evidence="2">
    <location>
        <position position="20"/>
    </location>
    <ligand>
        <name>[4Fe-4S] cluster</name>
        <dbReference type="ChEBI" id="CHEBI:49883"/>
        <label>1</label>
    </ligand>
</feature>
<feature type="binding site" evidence="2">
    <location>
        <position position="52"/>
    </location>
    <ligand>
        <name>[4Fe-4S] cluster</name>
        <dbReference type="ChEBI" id="CHEBI:49883"/>
        <label>1</label>
    </ligand>
</feature>
<feature type="binding site" evidence="2">
    <location>
        <position position="55"/>
    </location>
    <ligand>
        <name>[4Fe-4S] cluster</name>
        <dbReference type="ChEBI" id="CHEBI:49883"/>
        <label>1</label>
    </ligand>
</feature>
<feature type="binding site" evidence="2">
    <location>
        <position position="58"/>
    </location>
    <ligand>
        <name>[4Fe-4S] cluster</name>
        <dbReference type="ChEBI" id="CHEBI:49883"/>
        <label>1</label>
    </ligand>
</feature>
<feature type="binding site" evidence="2">
    <location>
        <position position="158"/>
    </location>
    <ligand>
        <name>[4Fe-4S] cluster</name>
        <dbReference type="ChEBI" id="CHEBI:49883"/>
        <label>2</label>
    </ligand>
</feature>
<feature type="binding site" evidence="2">
    <location>
        <position position="206"/>
    </location>
    <ligand>
        <name>[4Fe-4S] cluster</name>
        <dbReference type="ChEBI" id="CHEBI:49883"/>
        <label>2</label>
    </ligand>
</feature>
<feature type="binding site" evidence="2">
    <location>
        <position position="408"/>
    </location>
    <ligand>
        <name>[4Fe-4S] cluster</name>
        <dbReference type="ChEBI" id="CHEBI:49883"/>
        <label>2</label>
    </ligand>
</feature>
<feature type="binding site" evidence="2">
    <location>
        <position position="412"/>
    </location>
    <ligand>
        <name>[4Fe-4S] cluster</name>
        <dbReference type="ChEBI" id="CHEBI:49883"/>
        <label>2</label>
    </ligand>
</feature>
<sequence length="524" mass="59390">MSALLREEDLNDFITPEVACIKPVSSKPSNGVDGELSVGKEPEKVEISLADCLACVGCITSSEEILLSRQNQDVFVKEWNEKKTEGYILSVSIAPQCRVSLSQYFGMGVLKFDQMFIRYLQEVWGARYVVGIQEGREESIKLMNEVADKGERKICSACPGFLMYCEKKQQDLLPLLIDVKSPMEITGHLLKDGNKEKMYHLSIMPCFDKKLESMRPESIGLVDCVITPKELVNLITPEQVDKYFATTKETIGMLEWEDAIQRVTPKWMNIDTSFKTNEGSSSGGFAWQYILHRRFQMSDNDNDNAYKIETVRGRNLDVTEFRLIDEEGKILVRSTQVFGFRNIQNLRRLVKDVKPRKLKRFIRKRPTANGNDNSISLSSSINNQDNNNTKVEEPVDFCKSDFLEVMACPRGCIAGGGNLKNGIKNGPDQDSDPNQDLNTVYMTSIPMTSIEPRHNLTLPSSQENVIVGVISHDLDDSNTIIKLQEEQKYGNKYKRKLYNPSSISETHNGDSKNTIEQPVQFTTW</sequence>
<protein>
    <recommendedName>
        <fullName>Cytosolic Fe-S cluster assembly factor NAR1</fullName>
    </recommendedName>
    <alternativeName>
        <fullName>Nuclear architecture-related protein 1</fullName>
    </alternativeName>
</protein>
<proteinExistence type="inferred from homology"/>
<organism>
    <name type="scientific">Vanderwaltozyma polyspora (strain ATCC 22028 / DSM 70294 / BCRC 21397 / CBS 2163 / NBRC 10782 / NRRL Y-8283 / UCD 57-17)</name>
    <name type="common">Kluyveromyces polysporus</name>
    <dbReference type="NCBI Taxonomy" id="436907"/>
    <lineage>
        <taxon>Eukaryota</taxon>
        <taxon>Fungi</taxon>
        <taxon>Dikarya</taxon>
        <taxon>Ascomycota</taxon>
        <taxon>Saccharomycotina</taxon>
        <taxon>Saccharomycetes</taxon>
        <taxon>Saccharomycetales</taxon>
        <taxon>Saccharomycetaceae</taxon>
        <taxon>Vanderwaltozyma</taxon>
    </lineage>
</organism>